<evidence type="ECO:0000250" key="1"/>
<evidence type="ECO:0000250" key="2">
    <source>
        <dbReference type="UniProtKB" id="P43021"/>
    </source>
</evidence>
<evidence type="ECO:0000250" key="3">
    <source>
        <dbReference type="UniProtKB" id="Q91619"/>
    </source>
</evidence>
<evidence type="ECO:0000255" key="4"/>
<evidence type="ECO:0000256" key="5">
    <source>
        <dbReference type="SAM" id="MobiDB-lite"/>
    </source>
</evidence>
<evidence type="ECO:0000312" key="6">
    <source>
        <dbReference type="EMBL" id="CAJ82560.1"/>
    </source>
</evidence>
<accession>Q28GB8</accession>
<sequence>MAFLTAVLCFGFACMVQGVPSWLESRIPLLGSSVASKHPSLLDGNRHHRDMKYPFYMMQLYQNLVMANDTGLARGHNTATKEYDTVLSLFAKRCMESEKRWTLSFDMSAVSKSSELKLAELRIQLPHIEMSHNVTVDVYHTRDGEENLYLGSFEANPFSTKGSPWKVFNVTRILQHYFKEGQDIKSEYLRTKDRAERGSGMSSAEFLDSPGDSPQYNPHHTPLRRYLSTEGVMLVLFTKVKPSVNHIGFPSLIKTAESSKYVDMEKASRMPGIRRHRRNKNEKHHLSMGSIPSRHVDNGKPLCRRVDMIVNFEDIGWGNWIVYPKKYNAYRCEGACPIPLNETFKPTNHAYMKSVVKLYQPEKVECPLCVPIKMSPLSMLYYEGDEVVLRHHQEMIVEECGCS</sequence>
<reference evidence="6" key="1">
    <citation type="submission" date="2006-10" db="EMBL/GenBank/DDBJ databases">
        <authorList>
            <consortium name="Sanger Xenopus tropicalis EST/cDNA project"/>
        </authorList>
    </citation>
    <scope>NUCLEOTIDE SEQUENCE [LARGE SCALE MRNA]</scope>
    <source>
        <tissue evidence="6">Gastrula</tissue>
    </source>
</reference>
<feature type="signal peptide" evidence="4">
    <location>
        <begin position="1"/>
        <end position="18"/>
    </location>
</feature>
<feature type="propeptide" id="PRO_0000273276" evidence="4">
    <location>
        <begin position="19"/>
        <end position="278"/>
    </location>
</feature>
<feature type="chain" id="PRO_0000273277" description="Nodal homolog" evidence="4">
    <location>
        <begin position="279"/>
        <end position="403"/>
    </location>
</feature>
<feature type="region of interest" description="Disordered" evidence="5">
    <location>
        <begin position="195"/>
        <end position="220"/>
    </location>
</feature>
<feature type="glycosylation site" description="N-linked (GlcNAc...) asparagine" evidence="4">
    <location>
        <position position="68"/>
    </location>
</feature>
<feature type="glycosylation site" description="N-linked (GlcNAc...) asparagine" evidence="4">
    <location>
        <position position="133"/>
    </location>
</feature>
<feature type="glycosylation site" description="N-linked (GlcNAc...) asparagine" evidence="4">
    <location>
        <position position="169"/>
    </location>
</feature>
<feature type="glycosylation site" description="N-linked (GlcNAc...) asparagine" evidence="4">
    <location>
        <position position="341"/>
    </location>
</feature>
<feature type="disulfide bond" evidence="2">
    <location>
        <begin position="303"/>
        <end position="369"/>
    </location>
</feature>
<feature type="disulfide bond" evidence="2">
    <location>
        <begin position="332"/>
        <end position="400"/>
    </location>
</feature>
<feature type="disulfide bond" evidence="2">
    <location>
        <begin position="336"/>
        <end position="402"/>
    </location>
</feature>
<feature type="disulfide bond" description="Interchain" evidence="2">
    <location>
        <position position="366"/>
    </location>
</feature>
<comment type="function">
    <text evidence="1">Cooperation and regulatory loops of multiple nodals are essential for mesendoderm patterning in early embryos. Essential for mesoderm formation and axial patterning during embryonic development. Activates the activin-like signaling pathway to induce dorsal and ventral mesoderm in animal cap ectoderm. In addition, also dorsalizes ventral marginal zone (VMZ) tissues during gastrulation. Acts in a downstream signaling cascade via cripto and cer1 to mediate cardiogenesis in embryonic mesoderm. Directs the orientation of the left-right axis by driving the left-specific gene cascade in the left lateral plate mesoderm (By similarity).</text>
</comment>
<comment type="subunit">
    <text evidence="2 3">Homodimer; disulfide-linked. Interacts with, and is inhibited by cer1 and gdf10/bmp3b.</text>
</comment>
<comment type="subcellular location">
    <subcellularLocation>
        <location evidence="1">Secreted</location>
    </subcellularLocation>
</comment>
<comment type="similarity">
    <text evidence="4">Belongs to the TGF-beta family.</text>
</comment>
<name>NODAL_XENTR</name>
<gene>
    <name evidence="2" type="primary">nodal</name>
    <name type="synonym">nr1</name>
    <name type="ORF">TGas124h10.1</name>
</gene>
<protein>
    <recommendedName>
        <fullName>Nodal homolog</fullName>
    </recommendedName>
    <alternativeName>
        <fullName>Nodal-related protein 1</fullName>
    </alternativeName>
</protein>
<proteinExistence type="evidence at transcript level"/>
<organism>
    <name type="scientific">Xenopus tropicalis</name>
    <name type="common">Western clawed frog</name>
    <name type="synonym">Silurana tropicalis</name>
    <dbReference type="NCBI Taxonomy" id="8364"/>
    <lineage>
        <taxon>Eukaryota</taxon>
        <taxon>Metazoa</taxon>
        <taxon>Chordata</taxon>
        <taxon>Craniata</taxon>
        <taxon>Vertebrata</taxon>
        <taxon>Euteleostomi</taxon>
        <taxon>Amphibia</taxon>
        <taxon>Batrachia</taxon>
        <taxon>Anura</taxon>
        <taxon>Pipoidea</taxon>
        <taxon>Pipidae</taxon>
        <taxon>Xenopodinae</taxon>
        <taxon>Xenopus</taxon>
        <taxon>Silurana</taxon>
    </lineage>
</organism>
<dbReference type="EMBL" id="CR761456">
    <property type="protein sequence ID" value="CAJ82560.1"/>
    <property type="molecule type" value="mRNA"/>
</dbReference>
<dbReference type="RefSeq" id="NP_001016321.1">
    <property type="nucleotide sequence ID" value="NM_001016321.2"/>
</dbReference>
<dbReference type="SMR" id="Q28GB8"/>
<dbReference type="STRING" id="8364.ENSXETP00000052041"/>
<dbReference type="GlyCosmos" id="Q28GB8">
    <property type="glycosylation" value="4 sites, No reported glycans"/>
</dbReference>
<dbReference type="PaxDb" id="8364-ENSXETP00000019726"/>
<dbReference type="GeneID" id="549075"/>
<dbReference type="KEGG" id="xtr:549075"/>
<dbReference type="AGR" id="Xenbase:XB-GENE-487169"/>
<dbReference type="CTD" id="549075"/>
<dbReference type="Xenbase" id="XB-GENE-487169">
    <property type="gene designation" value="nodal1"/>
</dbReference>
<dbReference type="eggNOG" id="KOG3900">
    <property type="taxonomic scope" value="Eukaryota"/>
</dbReference>
<dbReference type="InParanoid" id="Q28GB8"/>
<dbReference type="OMA" id="NLVMAND"/>
<dbReference type="OrthoDB" id="5949851at2759"/>
<dbReference type="Proteomes" id="UP000008143">
    <property type="component" value="Chromosome 3"/>
</dbReference>
<dbReference type="GO" id="GO:0005615">
    <property type="term" value="C:extracellular space"/>
    <property type="evidence" value="ECO:0007669"/>
    <property type="project" value="UniProtKB-KW"/>
</dbReference>
<dbReference type="GO" id="GO:0005125">
    <property type="term" value="F:cytokine activity"/>
    <property type="evidence" value="ECO:0007669"/>
    <property type="project" value="UniProtKB-KW"/>
</dbReference>
<dbReference type="GO" id="GO:0008083">
    <property type="term" value="F:growth factor activity"/>
    <property type="evidence" value="ECO:0007669"/>
    <property type="project" value="UniProtKB-KW"/>
</dbReference>
<dbReference type="GO" id="GO:0048320">
    <property type="term" value="P:axial mesoderm formation"/>
    <property type="evidence" value="ECO:0000250"/>
    <property type="project" value="UniProtKB"/>
</dbReference>
<dbReference type="GO" id="GO:0003401">
    <property type="term" value="P:axis elongation"/>
    <property type="evidence" value="ECO:0000315"/>
    <property type="project" value="Xenbase"/>
</dbReference>
<dbReference type="GO" id="GO:0007368">
    <property type="term" value="P:determination of left/right symmetry"/>
    <property type="evidence" value="ECO:0000250"/>
    <property type="project" value="UniProtKB"/>
</dbReference>
<dbReference type="GO" id="GO:0007507">
    <property type="term" value="P:heart development"/>
    <property type="evidence" value="ECO:0000250"/>
    <property type="project" value="UniProtKB"/>
</dbReference>
<dbReference type="GO" id="GO:0055110">
    <property type="term" value="P:involution involved in gastrulation with mouth forming second"/>
    <property type="evidence" value="ECO:0000315"/>
    <property type="project" value="Xenbase"/>
</dbReference>
<dbReference type="CDD" id="cd13759">
    <property type="entry name" value="TGF_beta_NODAL"/>
    <property type="match status" value="1"/>
</dbReference>
<dbReference type="FunFam" id="2.10.90.10:FF:000026">
    <property type="entry name" value="Nodal homolog 3-A"/>
    <property type="match status" value="1"/>
</dbReference>
<dbReference type="FunFam" id="2.60.120.970:FF:000040">
    <property type="entry name" value="Nodal homolog 5"/>
    <property type="match status" value="1"/>
</dbReference>
<dbReference type="Gene3D" id="2.60.120.970">
    <property type="match status" value="1"/>
</dbReference>
<dbReference type="Gene3D" id="2.10.90.10">
    <property type="entry name" value="Cystine-knot cytokines"/>
    <property type="match status" value="1"/>
</dbReference>
<dbReference type="InterPro" id="IPR029034">
    <property type="entry name" value="Cystine-knot_cytokine"/>
</dbReference>
<dbReference type="InterPro" id="IPR001839">
    <property type="entry name" value="TGF-b_C"/>
</dbReference>
<dbReference type="InterPro" id="IPR001111">
    <property type="entry name" value="TGF-b_propeptide"/>
</dbReference>
<dbReference type="InterPro" id="IPR015615">
    <property type="entry name" value="TGF-beta-rel"/>
</dbReference>
<dbReference type="InterPro" id="IPR017948">
    <property type="entry name" value="TGFb_CS"/>
</dbReference>
<dbReference type="PANTHER" id="PTHR11848:SF159">
    <property type="entry name" value="NODAL HOMOLOG"/>
    <property type="match status" value="1"/>
</dbReference>
<dbReference type="PANTHER" id="PTHR11848">
    <property type="entry name" value="TGF-BETA FAMILY"/>
    <property type="match status" value="1"/>
</dbReference>
<dbReference type="Pfam" id="PF00019">
    <property type="entry name" value="TGF_beta"/>
    <property type="match status" value="1"/>
</dbReference>
<dbReference type="Pfam" id="PF00688">
    <property type="entry name" value="TGFb_propeptide"/>
    <property type="match status" value="1"/>
</dbReference>
<dbReference type="SMART" id="SM00204">
    <property type="entry name" value="TGFB"/>
    <property type="match status" value="1"/>
</dbReference>
<dbReference type="SUPFAM" id="SSF57501">
    <property type="entry name" value="Cystine-knot cytokines"/>
    <property type="match status" value="1"/>
</dbReference>
<dbReference type="PROSITE" id="PS00250">
    <property type="entry name" value="TGF_BETA_1"/>
    <property type="match status" value="1"/>
</dbReference>
<dbReference type="PROSITE" id="PS51362">
    <property type="entry name" value="TGF_BETA_2"/>
    <property type="match status" value="1"/>
</dbReference>
<keyword id="KW-0165">Cleavage on pair of basic residues</keyword>
<keyword id="KW-0202">Cytokine</keyword>
<keyword id="KW-0217">Developmental protein</keyword>
<keyword id="KW-1015">Disulfide bond</keyword>
<keyword id="KW-0325">Glycoprotein</keyword>
<keyword id="KW-0339">Growth factor</keyword>
<keyword id="KW-1185">Reference proteome</keyword>
<keyword id="KW-0964">Secreted</keyword>
<keyword id="KW-0732">Signal</keyword>